<protein>
    <recommendedName>
        <fullName evidence="1">Bifunctional protein GlmU</fullName>
    </recommendedName>
    <domain>
        <recommendedName>
            <fullName evidence="1">UDP-N-acetylglucosamine pyrophosphorylase</fullName>
            <ecNumber evidence="1">2.7.7.23</ecNumber>
        </recommendedName>
        <alternativeName>
            <fullName evidence="1">N-acetylglucosamine-1-phosphate uridyltransferase</fullName>
        </alternativeName>
    </domain>
    <domain>
        <recommendedName>
            <fullName evidence="1">Glucosamine-1-phosphate N-acetyltransferase</fullName>
            <ecNumber evidence="1">2.3.1.157</ecNumber>
        </recommendedName>
    </domain>
</protein>
<reference key="1">
    <citation type="journal article" date="2007" name="J. Bacteriol.">
        <title>The complete genome sequence of Campylobacter jejuni strain 81116 (NCTC11828).</title>
        <authorList>
            <person name="Pearson B.M."/>
            <person name="Gaskin D.J.H."/>
            <person name="Segers R.P.A.M."/>
            <person name="Wells J.M."/>
            <person name="Nuijten P.J.M."/>
            <person name="van Vliet A.H.M."/>
        </authorList>
    </citation>
    <scope>NUCLEOTIDE SEQUENCE [LARGE SCALE GENOMIC DNA]</scope>
    <source>
        <strain>81116 / NCTC 11828</strain>
    </source>
</reference>
<accession>A8FLN0</accession>
<evidence type="ECO:0000255" key="1">
    <source>
        <dbReference type="HAMAP-Rule" id="MF_01631"/>
    </source>
</evidence>
<gene>
    <name evidence="1" type="primary">glmU</name>
    <name type="ordered locus">C8J_0768</name>
</gene>
<comment type="function">
    <text evidence="1">Catalyzes the last two sequential reactions in the de novo biosynthetic pathway for UDP-N-acetylglucosamine (UDP-GlcNAc). The C-terminal domain catalyzes the transfer of acetyl group from acetyl coenzyme A to glucosamine-1-phosphate (GlcN-1-P) to produce N-acetylglucosamine-1-phosphate (GlcNAc-1-P), which is converted into UDP-GlcNAc by the transfer of uridine 5-monophosphate (from uridine 5-triphosphate), a reaction catalyzed by the N-terminal domain.</text>
</comment>
<comment type="catalytic activity">
    <reaction evidence="1">
        <text>alpha-D-glucosamine 1-phosphate + acetyl-CoA = N-acetyl-alpha-D-glucosamine 1-phosphate + CoA + H(+)</text>
        <dbReference type="Rhea" id="RHEA:13725"/>
        <dbReference type="ChEBI" id="CHEBI:15378"/>
        <dbReference type="ChEBI" id="CHEBI:57287"/>
        <dbReference type="ChEBI" id="CHEBI:57288"/>
        <dbReference type="ChEBI" id="CHEBI:57776"/>
        <dbReference type="ChEBI" id="CHEBI:58516"/>
        <dbReference type="EC" id="2.3.1.157"/>
    </reaction>
</comment>
<comment type="catalytic activity">
    <reaction evidence="1">
        <text>N-acetyl-alpha-D-glucosamine 1-phosphate + UTP + H(+) = UDP-N-acetyl-alpha-D-glucosamine + diphosphate</text>
        <dbReference type="Rhea" id="RHEA:13509"/>
        <dbReference type="ChEBI" id="CHEBI:15378"/>
        <dbReference type="ChEBI" id="CHEBI:33019"/>
        <dbReference type="ChEBI" id="CHEBI:46398"/>
        <dbReference type="ChEBI" id="CHEBI:57705"/>
        <dbReference type="ChEBI" id="CHEBI:57776"/>
        <dbReference type="EC" id="2.7.7.23"/>
    </reaction>
</comment>
<comment type="cofactor">
    <cofactor evidence="1">
        <name>Mg(2+)</name>
        <dbReference type="ChEBI" id="CHEBI:18420"/>
    </cofactor>
    <text evidence="1">Binds 1 Mg(2+) ion per subunit.</text>
</comment>
<comment type="pathway">
    <text evidence="1">Nucleotide-sugar biosynthesis; UDP-N-acetyl-alpha-D-glucosamine biosynthesis; N-acetyl-alpha-D-glucosamine 1-phosphate from alpha-D-glucosamine 6-phosphate (route II): step 2/2.</text>
</comment>
<comment type="pathway">
    <text evidence="1">Nucleotide-sugar biosynthesis; UDP-N-acetyl-alpha-D-glucosamine biosynthesis; UDP-N-acetyl-alpha-D-glucosamine from N-acetyl-alpha-D-glucosamine 1-phosphate: step 1/1.</text>
</comment>
<comment type="pathway">
    <text evidence="1">Bacterial outer membrane biogenesis; LPS lipid A biosynthesis.</text>
</comment>
<comment type="subunit">
    <text evidence="1">Homotrimer.</text>
</comment>
<comment type="subcellular location">
    <subcellularLocation>
        <location evidence="1">Cytoplasm</location>
    </subcellularLocation>
</comment>
<comment type="similarity">
    <text evidence="1">In the N-terminal section; belongs to the N-acetylglucosamine-1-phosphate uridyltransferase family.</text>
</comment>
<comment type="similarity">
    <text evidence="1">In the C-terminal section; belongs to the transferase hexapeptide repeat family.</text>
</comment>
<feature type="chain" id="PRO_1000073645" description="Bifunctional protein GlmU">
    <location>
        <begin position="1"/>
        <end position="429"/>
    </location>
</feature>
<feature type="region of interest" description="Pyrophosphorylase" evidence="1">
    <location>
        <begin position="1"/>
        <end position="223"/>
    </location>
</feature>
<feature type="region of interest" description="Linker" evidence="1">
    <location>
        <begin position="224"/>
        <end position="244"/>
    </location>
</feature>
<feature type="region of interest" description="N-acetyltransferase" evidence="1">
    <location>
        <begin position="245"/>
        <end position="429"/>
    </location>
</feature>
<feature type="active site" description="Proton acceptor" evidence="1">
    <location>
        <position position="336"/>
    </location>
</feature>
<feature type="binding site" evidence="1">
    <location>
        <begin position="8"/>
        <end position="11"/>
    </location>
    <ligand>
        <name>UDP-N-acetyl-alpha-D-glucosamine</name>
        <dbReference type="ChEBI" id="CHEBI:57705"/>
    </ligand>
</feature>
<feature type="binding site" evidence="1">
    <location>
        <position position="22"/>
    </location>
    <ligand>
        <name>UDP-N-acetyl-alpha-D-glucosamine</name>
        <dbReference type="ChEBI" id="CHEBI:57705"/>
    </ligand>
</feature>
<feature type="binding site" evidence="1">
    <location>
        <begin position="81"/>
        <end position="82"/>
    </location>
    <ligand>
        <name>UDP-N-acetyl-alpha-D-glucosamine</name>
        <dbReference type="ChEBI" id="CHEBI:57705"/>
    </ligand>
</feature>
<feature type="binding site" evidence="1">
    <location>
        <position position="102"/>
    </location>
    <ligand>
        <name>Mg(2+)</name>
        <dbReference type="ChEBI" id="CHEBI:18420"/>
    </ligand>
</feature>
<feature type="binding site" evidence="1">
    <location>
        <position position="135"/>
    </location>
    <ligand>
        <name>UDP-N-acetyl-alpha-D-glucosamine</name>
        <dbReference type="ChEBI" id="CHEBI:57705"/>
    </ligand>
</feature>
<feature type="binding site" evidence="1">
    <location>
        <position position="149"/>
    </location>
    <ligand>
        <name>UDP-N-acetyl-alpha-D-glucosamine</name>
        <dbReference type="ChEBI" id="CHEBI:57705"/>
    </ligand>
</feature>
<feature type="binding site" evidence="1">
    <location>
        <position position="164"/>
    </location>
    <ligand>
        <name>UDP-N-acetyl-alpha-D-glucosamine</name>
        <dbReference type="ChEBI" id="CHEBI:57705"/>
    </ligand>
</feature>
<feature type="binding site" evidence="1">
    <location>
        <position position="221"/>
    </location>
    <ligand>
        <name>Mg(2+)</name>
        <dbReference type="ChEBI" id="CHEBI:18420"/>
    </ligand>
</feature>
<feature type="binding site" evidence="1">
    <location>
        <position position="221"/>
    </location>
    <ligand>
        <name>UDP-N-acetyl-alpha-D-glucosamine</name>
        <dbReference type="ChEBI" id="CHEBI:57705"/>
    </ligand>
</feature>
<feature type="binding site" evidence="1">
    <location>
        <position position="308"/>
    </location>
    <ligand>
        <name>UDP-N-acetyl-alpha-D-glucosamine</name>
        <dbReference type="ChEBI" id="CHEBI:57705"/>
    </ligand>
</feature>
<feature type="binding site" evidence="1">
    <location>
        <position position="325"/>
    </location>
    <ligand>
        <name>UDP-N-acetyl-alpha-D-glucosamine</name>
        <dbReference type="ChEBI" id="CHEBI:57705"/>
    </ligand>
</feature>
<feature type="binding site" evidence="1">
    <location>
        <position position="339"/>
    </location>
    <ligand>
        <name>UDP-N-acetyl-alpha-D-glucosamine</name>
        <dbReference type="ChEBI" id="CHEBI:57705"/>
    </ligand>
</feature>
<feature type="binding site" evidence="1">
    <location>
        <position position="350"/>
    </location>
    <ligand>
        <name>UDP-N-acetyl-alpha-D-glucosamine</name>
        <dbReference type="ChEBI" id="CHEBI:57705"/>
    </ligand>
</feature>
<feature type="binding site" evidence="1">
    <location>
        <begin position="359"/>
        <end position="360"/>
    </location>
    <ligand>
        <name>acetyl-CoA</name>
        <dbReference type="ChEBI" id="CHEBI:57288"/>
    </ligand>
</feature>
<feature type="binding site" evidence="1">
    <location>
        <position position="378"/>
    </location>
    <ligand>
        <name>acetyl-CoA</name>
        <dbReference type="ChEBI" id="CHEBI:57288"/>
    </ligand>
</feature>
<feature type="binding site" evidence="1">
    <location>
        <position position="396"/>
    </location>
    <ligand>
        <name>acetyl-CoA</name>
        <dbReference type="ChEBI" id="CHEBI:57288"/>
    </ligand>
</feature>
<feature type="binding site" evidence="1">
    <location>
        <position position="413"/>
    </location>
    <ligand>
        <name>acetyl-CoA</name>
        <dbReference type="ChEBI" id="CHEBI:57288"/>
    </ligand>
</feature>
<keyword id="KW-0012">Acyltransferase</keyword>
<keyword id="KW-0133">Cell shape</keyword>
<keyword id="KW-0961">Cell wall biogenesis/degradation</keyword>
<keyword id="KW-0963">Cytoplasm</keyword>
<keyword id="KW-0460">Magnesium</keyword>
<keyword id="KW-0479">Metal-binding</keyword>
<keyword id="KW-0511">Multifunctional enzyme</keyword>
<keyword id="KW-0548">Nucleotidyltransferase</keyword>
<keyword id="KW-0573">Peptidoglycan synthesis</keyword>
<keyword id="KW-0677">Repeat</keyword>
<keyword id="KW-0808">Transferase</keyword>
<dbReference type="EC" id="2.7.7.23" evidence="1"/>
<dbReference type="EC" id="2.3.1.157" evidence="1"/>
<dbReference type="EMBL" id="CP000814">
    <property type="protein sequence ID" value="ABV52367.1"/>
    <property type="molecule type" value="Genomic_DNA"/>
</dbReference>
<dbReference type="RefSeq" id="WP_002866966.1">
    <property type="nucleotide sequence ID" value="NC_009839.1"/>
</dbReference>
<dbReference type="SMR" id="A8FLN0"/>
<dbReference type="KEGG" id="cju:C8J_0768"/>
<dbReference type="HOGENOM" id="CLU_029499_15_2_7"/>
<dbReference type="UniPathway" id="UPA00113">
    <property type="reaction ID" value="UER00532"/>
</dbReference>
<dbReference type="UniPathway" id="UPA00113">
    <property type="reaction ID" value="UER00533"/>
</dbReference>
<dbReference type="UniPathway" id="UPA00973"/>
<dbReference type="GO" id="GO:0005737">
    <property type="term" value="C:cytoplasm"/>
    <property type="evidence" value="ECO:0007669"/>
    <property type="project" value="UniProtKB-SubCell"/>
</dbReference>
<dbReference type="GO" id="GO:0016020">
    <property type="term" value="C:membrane"/>
    <property type="evidence" value="ECO:0007669"/>
    <property type="project" value="GOC"/>
</dbReference>
<dbReference type="GO" id="GO:0019134">
    <property type="term" value="F:glucosamine-1-phosphate N-acetyltransferase activity"/>
    <property type="evidence" value="ECO:0007669"/>
    <property type="project" value="UniProtKB-UniRule"/>
</dbReference>
<dbReference type="GO" id="GO:0000287">
    <property type="term" value="F:magnesium ion binding"/>
    <property type="evidence" value="ECO:0007669"/>
    <property type="project" value="UniProtKB-UniRule"/>
</dbReference>
<dbReference type="GO" id="GO:0003977">
    <property type="term" value="F:UDP-N-acetylglucosamine diphosphorylase activity"/>
    <property type="evidence" value="ECO:0007669"/>
    <property type="project" value="UniProtKB-UniRule"/>
</dbReference>
<dbReference type="GO" id="GO:0000902">
    <property type="term" value="P:cell morphogenesis"/>
    <property type="evidence" value="ECO:0007669"/>
    <property type="project" value="UniProtKB-UniRule"/>
</dbReference>
<dbReference type="GO" id="GO:0071555">
    <property type="term" value="P:cell wall organization"/>
    <property type="evidence" value="ECO:0007669"/>
    <property type="project" value="UniProtKB-KW"/>
</dbReference>
<dbReference type="GO" id="GO:0009245">
    <property type="term" value="P:lipid A biosynthetic process"/>
    <property type="evidence" value="ECO:0007669"/>
    <property type="project" value="UniProtKB-UniRule"/>
</dbReference>
<dbReference type="GO" id="GO:0009252">
    <property type="term" value="P:peptidoglycan biosynthetic process"/>
    <property type="evidence" value="ECO:0007669"/>
    <property type="project" value="UniProtKB-UniRule"/>
</dbReference>
<dbReference type="GO" id="GO:0008360">
    <property type="term" value="P:regulation of cell shape"/>
    <property type="evidence" value="ECO:0007669"/>
    <property type="project" value="UniProtKB-KW"/>
</dbReference>
<dbReference type="GO" id="GO:0006048">
    <property type="term" value="P:UDP-N-acetylglucosamine biosynthetic process"/>
    <property type="evidence" value="ECO:0007669"/>
    <property type="project" value="UniProtKB-UniPathway"/>
</dbReference>
<dbReference type="CDD" id="cd02540">
    <property type="entry name" value="GT2_GlmU_N_bac"/>
    <property type="match status" value="1"/>
</dbReference>
<dbReference type="CDD" id="cd03353">
    <property type="entry name" value="LbH_GlmU_C"/>
    <property type="match status" value="1"/>
</dbReference>
<dbReference type="Gene3D" id="2.160.10.10">
    <property type="entry name" value="Hexapeptide repeat proteins"/>
    <property type="match status" value="1"/>
</dbReference>
<dbReference type="Gene3D" id="3.90.550.10">
    <property type="entry name" value="Spore Coat Polysaccharide Biosynthesis Protein SpsA, Chain A"/>
    <property type="match status" value="1"/>
</dbReference>
<dbReference type="HAMAP" id="MF_01631">
    <property type="entry name" value="GlmU"/>
    <property type="match status" value="1"/>
</dbReference>
<dbReference type="InterPro" id="IPR005882">
    <property type="entry name" value="Bifunctional_GlmU"/>
</dbReference>
<dbReference type="InterPro" id="IPR050065">
    <property type="entry name" value="GlmU-like"/>
</dbReference>
<dbReference type="InterPro" id="IPR038009">
    <property type="entry name" value="GlmU_C_LbH"/>
</dbReference>
<dbReference type="InterPro" id="IPR001451">
    <property type="entry name" value="Hexapep"/>
</dbReference>
<dbReference type="InterPro" id="IPR025877">
    <property type="entry name" value="MobA-like_NTP_Trfase"/>
</dbReference>
<dbReference type="InterPro" id="IPR029044">
    <property type="entry name" value="Nucleotide-diphossugar_trans"/>
</dbReference>
<dbReference type="InterPro" id="IPR011004">
    <property type="entry name" value="Trimer_LpxA-like_sf"/>
</dbReference>
<dbReference type="NCBIfam" id="TIGR01173">
    <property type="entry name" value="glmU"/>
    <property type="match status" value="1"/>
</dbReference>
<dbReference type="NCBIfam" id="NF010939">
    <property type="entry name" value="PRK14359.1"/>
    <property type="match status" value="1"/>
</dbReference>
<dbReference type="PANTHER" id="PTHR43584:SF3">
    <property type="entry name" value="BIFUNCTIONAL PROTEIN GLMU"/>
    <property type="match status" value="1"/>
</dbReference>
<dbReference type="PANTHER" id="PTHR43584">
    <property type="entry name" value="NUCLEOTIDYL TRANSFERASE"/>
    <property type="match status" value="1"/>
</dbReference>
<dbReference type="Pfam" id="PF00132">
    <property type="entry name" value="Hexapep"/>
    <property type="match status" value="1"/>
</dbReference>
<dbReference type="Pfam" id="PF12804">
    <property type="entry name" value="NTP_transf_3"/>
    <property type="match status" value="1"/>
</dbReference>
<dbReference type="SUPFAM" id="SSF53448">
    <property type="entry name" value="Nucleotide-diphospho-sugar transferases"/>
    <property type="match status" value="1"/>
</dbReference>
<dbReference type="SUPFAM" id="SSF51161">
    <property type="entry name" value="Trimeric LpxA-like enzymes"/>
    <property type="match status" value="1"/>
</dbReference>
<organism>
    <name type="scientific">Campylobacter jejuni subsp. jejuni serotype O:6 (strain 81116 / NCTC 11828)</name>
    <dbReference type="NCBI Taxonomy" id="407148"/>
    <lineage>
        <taxon>Bacteria</taxon>
        <taxon>Pseudomonadati</taxon>
        <taxon>Campylobacterota</taxon>
        <taxon>Epsilonproteobacteria</taxon>
        <taxon>Campylobacterales</taxon>
        <taxon>Campylobacteraceae</taxon>
        <taxon>Campylobacter</taxon>
    </lineage>
</organism>
<sequence length="429" mass="48145">MKTSILILAAGLGTRMKSQKPKVLQELCQKSMILHILKKAFALSDDVSVVLSHQKERVEKEILEYFPKTQILEQDLQNYPGTAGALRGFEPKNERVLILCGDMPLVEQTSLEALLSNNAKLNLAVFKARDPKSYGRVVIKNDSVEKIVEFKDANTQEKEINTCNAGVYVIDSRLLKELLPLIDNNNAAKEYYLTDIVKLAKEKDVMIKAVFVDEDEFMGINDKFELSIAENFMQEKIKKYWMQQGVIFHLPQSTFIGTDVEFMGECEVYENVRIEGKSKIINSIIKSSSVIENSIVENSDVGPLAHLRPNCELKNTHIGNFVECKNAKLNTVKAGHLSYLGDCEIDSGTNIGCGTITCNYDGVKKHKTIIGKNVFVGSDTQFIAPVKIEDEVIIAAGSTVSVNVEKGALFINRAEHKMIKDYYYKKFQK</sequence>
<name>GLMU_CAMJ8</name>
<proteinExistence type="inferred from homology"/>